<proteinExistence type="evidence at protein level"/>
<gene>
    <name evidence="9" type="primary">DIP2</name>
    <name evidence="9" type="ORF">CG7020</name>
</gene>
<keyword id="KW-1003">Cell membrane</keyword>
<keyword id="KW-0217">Developmental protein</keyword>
<keyword id="KW-0472">Membrane</keyword>
<keyword id="KW-0524">Neurogenesis</keyword>
<keyword id="KW-0597">Phosphoprotein</keyword>
<keyword id="KW-1185">Reference proteome</keyword>
<evidence type="ECO:0000255" key="1">
    <source>
        <dbReference type="PROSITE-ProRule" id="PRU01260"/>
    </source>
</evidence>
<evidence type="ECO:0000256" key="2">
    <source>
        <dbReference type="SAM" id="MobiDB-lite"/>
    </source>
</evidence>
<evidence type="ECO:0000269" key="3">
    <source>
    </source>
</evidence>
<evidence type="ECO:0000269" key="4">
    <source>
    </source>
</evidence>
<evidence type="ECO:0000269" key="5">
    <source>
    </source>
</evidence>
<evidence type="ECO:0000269" key="6">
    <source>
    </source>
</evidence>
<evidence type="ECO:0000269" key="7">
    <source>
    </source>
</evidence>
<evidence type="ECO:0000305" key="8"/>
<evidence type="ECO:0000312" key="9">
    <source>
        <dbReference type="FlyBase" id="FBgn0024806"/>
    </source>
</evidence>
<evidence type="ECO:0000312" key="10">
    <source>
        <dbReference type="Proteomes" id="UP000000803"/>
    </source>
</evidence>
<reference key="1">
    <citation type="submission" date="2000-03" db="EMBL/GenBank/DDBJ databases">
        <authorList>
            <person name="Decroos F.C."/>
            <person name="Voas M.G."/>
            <person name="Rebay I."/>
        </authorList>
    </citation>
    <scope>NUCLEOTIDE SEQUENCE [MRNA]</scope>
</reference>
<reference key="2">
    <citation type="journal article" date="2000" name="Science">
        <title>The genome sequence of Drosophila melanogaster.</title>
        <authorList>
            <person name="Adams M.D."/>
            <person name="Celniker S.E."/>
            <person name="Holt R.A."/>
            <person name="Evans C.A."/>
            <person name="Gocayne J.D."/>
            <person name="Amanatides P.G."/>
            <person name="Scherer S.E."/>
            <person name="Li P.W."/>
            <person name="Hoskins R.A."/>
            <person name="Galle R.F."/>
            <person name="George R.A."/>
            <person name="Lewis S.E."/>
            <person name="Richards S."/>
            <person name="Ashburner M."/>
            <person name="Henderson S.N."/>
            <person name="Sutton G.G."/>
            <person name="Wortman J.R."/>
            <person name="Yandell M.D."/>
            <person name="Zhang Q."/>
            <person name="Chen L.X."/>
            <person name="Brandon R.C."/>
            <person name="Rogers Y.-H.C."/>
            <person name="Blazej R.G."/>
            <person name="Champe M."/>
            <person name="Pfeiffer B.D."/>
            <person name="Wan K.H."/>
            <person name="Doyle C."/>
            <person name="Baxter E.G."/>
            <person name="Helt G."/>
            <person name="Nelson C.R."/>
            <person name="Miklos G.L.G."/>
            <person name="Abril J.F."/>
            <person name="Agbayani A."/>
            <person name="An H.-J."/>
            <person name="Andrews-Pfannkoch C."/>
            <person name="Baldwin D."/>
            <person name="Ballew R.M."/>
            <person name="Basu A."/>
            <person name="Baxendale J."/>
            <person name="Bayraktaroglu L."/>
            <person name="Beasley E.M."/>
            <person name="Beeson K.Y."/>
            <person name="Benos P.V."/>
            <person name="Berman B.P."/>
            <person name="Bhandari D."/>
            <person name="Bolshakov S."/>
            <person name="Borkova D."/>
            <person name="Botchan M.R."/>
            <person name="Bouck J."/>
            <person name="Brokstein P."/>
            <person name="Brottier P."/>
            <person name="Burtis K.C."/>
            <person name="Busam D.A."/>
            <person name="Butler H."/>
            <person name="Cadieu E."/>
            <person name="Center A."/>
            <person name="Chandra I."/>
            <person name="Cherry J.M."/>
            <person name="Cawley S."/>
            <person name="Dahlke C."/>
            <person name="Davenport L.B."/>
            <person name="Davies P."/>
            <person name="de Pablos B."/>
            <person name="Delcher A."/>
            <person name="Deng Z."/>
            <person name="Mays A.D."/>
            <person name="Dew I."/>
            <person name="Dietz S.M."/>
            <person name="Dodson K."/>
            <person name="Doup L.E."/>
            <person name="Downes M."/>
            <person name="Dugan-Rocha S."/>
            <person name="Dunkov B.C."/>
            <person name="Dunn P."/>
            <person name="Durbin K.J."/>
            <person name="Evangelista C.C."/>
            <person name="Ferraz C."/>
            <person name="Ferriera S."/>
            <person name="Fleischmann W."/>
            <person name="Fosler C."/>
            <person name="Gabrielian A.E."/>
            <person name="Garg N.S."/>
            <person name="Gelbart W.M."/>
            <person name="Glasser K."/>
            <person name="Glodek A."/>
            <person name="Gong F."/>
            <person name="Gorrell J.H."/>
            <person name="Gu Z."/>
            <person name="Guan P."/>
            <person name="Harris M."/>
            <person name="Harris N.L."/>
            <person name="Harvey D.A."/>
            <person name="Heiman T.J."/>
            <person name="Hernandez J.R."/>
            <person name="Houck J."/>
            <person name="Hostin D."/>
            <person name="Houston K.A."/>
            <person name="Howland T.J."/>
            <person name="Wei M.-H."/>
            <person name="Ibegwam C."/>
            <person name="Jalali M."/>
            <person name="Kalush F."/>
            <person name="Karpen G.H."/>
            <person name="Ke Z."/>
            <person name="Kennison J.A."/>
            <person name="Ketchum K.A."/>
            <person name="Kimmel B.E."/>
            <person name="Kodira C.D."/>
            <person name="Kraft C.L."/>
            <person name="Kravitz S."/>
            <person name="Kulp D."/>
            <person name="Lai Z."/>
            <person name="Lasko P."/>
            <person name="Lei Y."/>
            <person name="Levitsky A.A."/>
            <person name="Li J.H."/>
            <person name="Li Z."/>
            <person name="Liang Y."/>
            <person name="Lin X."/>
            <person name="Liu X."/>
            <person name="Mattei B."/>
            <person name="McIntosh T.C."/>
            <person name="McLeod M.P."/>
            <person name="McPherson D."/>
            <person name="Merkulov G."/>
            <person name="Milshina N.V."/>
            <person name="Mobarry C."/>
            <person name="Morris J."/>
            <person name="Moshrefi A."/>
            <person name="Mount S.M."/>
            <person name="Moy M."/>
            <person name="Murphy B."/>
            <person name="Murphy L."/>
            <person name="Muzny D.M."/>
            <person name="Nelson D.L."/>
            <person name="Nelson D.R."/>
            <person name="Nelson K.A."/>
            <person name="Nixon K."/>
            <person name="Nusskern D.R."/>
            <person name="Pacleb J.M."/>
            <person name="Palazzolo M."/>
            <person name="Pittman G.S."/>
            <person name="Pan S."/>
            <person name="Pollard J."/>
            <person name="Puri V."/>
            <person name="Reese M.G."/>
            <person name="Reinert K."/>
            <person name="Remington K."/>
            <person name="Saunders R.D.C."/>
            <person name="Scheeler F."/>
            <person name="Shen H."/>
            <person name="Shue B.C."/>
            <person name="Siden-Kiamos I."/>
            <person name="Simpson M."/>
            <person name="Skupski M.P."/>
            <person name="Smith T.J."/>
            <person name="Spier E."/>
            <person name="Spradling A.C."/>
            <person name="Stapleton M."/>
            <person name="Strong R."/>
            <person name="Sun E."/>
            <person name="Svirskas R."/>
            <person name="Tector C."/>
            <person name="Turner R."/>
            <person name="Venter E."/>
            <person name="Wang A.H."/>
            <person name="Wang X."/>
            <person name="Wang Z.-Y."/>
            <person name="Wassarman D.A."/>
            <person name="Weinstock G.M."/>
            <person name="Weissenbach J."/>
            <person name="Williams S.M."/>
            <person name="Woodage T."/>
            <person name="Worley K.C."/>
            <person name="Wu D."/>
            <person name="Yang S."/>
            <person name="Yao Q.A."/>
            <person name="Ye J."/>
            <person name="Yeh R.-F."/>
            <person name="Zaveri J.S."/>
            <person name="Zhan M."/>
            <person name="Zhang G."/>
            <person name="Zhao Q."/>
            <person name="Zheng L."/>
            <person name="Zheng X.H."/>
            <person name="Zhong F.N."/>
            <person name="Zhong W."/>
            <person name="Zhou X."/>
            <person name="Zhu S.C."/>
            <person name="Zhu X."/>
            <person name="Smith H.O."/>
            <person name="Gibbs R.A."/>
            <person name="Myers E.W."/>
            <person name="Rubin G.M."/>
            <person name="Venter J.C."/>
        </authorList>
    </citation>
    <scope>NUCLEOTIDE SEQUENCE [LARGE SCALE GENOMIC DNA]</scope>
    <source>
        <strain>Berkeley</strain>
    </source>
</reference>
<reference key="3">
    <citation type="journal article" date="2002" name="Genome Biol.">
        <title>Annotation of the Drosophila melanogaster euchromatic genome: a systematic review.</title>
        <authorList>
            <person name="Misra S."/>
            <person name="Crosby M.A."/>
            <person name="Mungall C.J."/>
            <person name="Matthews B.B."/>
            <person name="Campbell K.S."/>
            <person name="Hradecky P."/>
            <person name="Huang Y."/>
            <person name="Kaminker J.S."/>
            <person name="Millburn G.H."/>
            <person name="Prochnik S.E."/>
            <person name="Smith C.D."/>
            <person name="Tupy J.L."/>
            <person name="Whitfield E.J."/>
            <person name="Bayraktaroglu L."/>
            <person name="Berman B.P."/>
            <person name="Bettencourt B.R."/>
            <person name="Celniker S.E."/>
            <person name="de Grey A.D.N.J."/>
            <person name="Drysdale R.A."/>
            <person name="Harris N.L."/>
            <person name="Richter J."/>
            <person name="Russo S."/>
            <person name="Schroeder A.J."/>
            <person name="Shu S.Q."/>
            <person name="Stapleton M."/>
            <person name="Yamada C."/>
            <person name="Ashburner M."/>
            <person name="Gelbart W.M."/>
            <person name="Rubin G.M."/>
            <person name="Lewis S.E."/>
        </authorList>
    </citation>
    <scope>GENOME REANNOTATION</scope>
    <source>
        <strain>Berkeley</strain>
    </source>
</reference>
<reference key="4">
    <citation type="journal article" date="2002" name="Gene">
        <title>Cloning, genomic organization and expression pattern of a novel Drosophila gene, the disco-interacting protein 2 (dip2), and its murine homolog.</title>
        <authorList>
            <person name="Mukhopadhyay M."/>
            <person name="Pelka P."/>
            <person name="DeSousa D."/>
            <person name="Kablar B."/>
            <person name="Schindler A."/>
            <person name="Rudnicki M.A."/>
            <person name="Campos A.R."/>
        </authorList>
    </citation>
    <scope>TISSUE SPECIFICITY</scope>
    <scope>INTERACTION WITH DISCO</scope>
</reference>
<reference key="5">
    <citation type="journal article" date="2008" name="J. Proteome Res.">
        <title>Phosphoproteome analysis of Drosophila melanogaster embryos.</title>
        <authorList>
            <person name="Zhai B."/>
            <person name="Villen J."/>
            <person name="Beausoleil S.A."/>
            <person name="Mintseris J."/>
            <person name="Gygi S.P."/>
        </authorList>
    </citation>
    <scope>PHOSPHORYLATION [LARGE SCALE ANALYSIS] AT TYR-60 AND TYR-61</scope>
    <scope>IDENTIFICATION BY MASS SPECTROMETRY</scope>
    <source>
        <tissue>Embryo</tissue>
    </source>
</reference>
<reference key="6">
    <citation type="journal article" date="2017" name="Biochem. Biophys. Res. Commun.">
        <title>DISCO interacting protein 2 determines direction of axon projection under the regulation of c-Jun N-terminal kinase in the Drosophila mushroom body.</title>
        <authorList>
            <person name="Nitta Y."/>
            <person name="Sugie A."/>
        </authorList>
    </citation>
    <scope>FUNCTION</scope>
    <scope>SUBCELLULAR LOCATION</scope>
    <scope>DISRUPTION PHENOTYPE</scope>
</reference>
<reference key="7">
    <citation type="journal article" date="2017" name="Biochem. Biophys. Res. Commun.">
        <title>Identification of glaikit in a genome-wide expression profiling for axonal bifurcation of the mushroom body in Drosophila.</title>
        <authorList>
            <person name="Nitta Y."/>
            <person name="Sugie A."/>
        </authorList>
    </citation>
    <scope>FUNCTION</scope>
    <scope>DISRUPTION PHENOTYPE</scope>
</reference>
<reference key="8">
    <citation type="journal article" date="2017" name="Dev. Biol.">
        <title>DISCO Interacting Protein 2 regulates axonal bifurcation and guidance of Drosophila mushroom body neurons.</title>
        <authorList>
            <person name="Nitta Y."/>
            <person name="Yamazaki D."/>
            <person name="Sugie A."/>
            <person name="Hiroi M."/>
            <person name="Tabata T."/>
        </authorList>
    </citation>
    <scope>FUNCTION</scope>
    <scope>SUBCELLULAR LOCATION</scope>
    <scope>TISSUE SPECIFICITY</scope>
    <scope>DISRUPTION PHENOTYPE</scope>
</reference>
<sequence length="1773" mass="194154">MEHTASLPGYVREKLAELDLELSEGDITQKGYEKKRAKLLQPFLKKPEGDKVKSTPPPPYYNVKNANNSTNHGNINNDGVIVSSEGYSYVTEVPSLSSSQQRHSKKIDFHQQAAMSLSSAPQSGNAGAPGYENMRPQGGAVGDPGYQNTREPSAFQNQQSTNNSQHRQRRTQRKVTHNEKRYHSEVRQEAVQQALAALKGRPKPSLPMPSKRTSVLNRSPGCNDELDSSTDDESIPEETISPDKEYNYPRDHISNSILPPEPIIKPPIRESSMGSQQHARTDVKQNQITNQKYTAPNSAPERRPPQNLPPLPTSEPLSSDYPPIAYKRENDFSDKAFKQKQYNAPDITQFNNAHRAADRVTRYVNVSQNELNETDANGKWKVSAKIQQLLNTLKRPKRRPLPEFYEDNDIELEIAANTKDPNAPKPEGSTMTPVQGEQLSIPAGLPRTLECALQRYGTNSFKSPMATVLDPNGKVTTTLTYGKLLSRAQKIAHALSTKIFSKGPEQVTLKPGDRVALVYPNNDPLSFITAWYGCMFRGLVPLPIELPLSSSDTPPQQVGFLLSSCGITVALTSEACLKGLPKSTTTGEIAKLKGWPRLQWFVTEHLPKPPKEFNVGNLRADDSAAAYIEYTTDKEGSVMGVTVTRAAMINHCRALTMACHYTEGETIVCVLDFKREVGLWHSVLTSVLNGMHVIFIPYALMKLRPSSWMQLITKHRASCCLVKSRDLHWGLLATKDHKDISLSSLRMLLVADGANPWSLSSCDQFLSVFQAKGLRSDAICPCASSSEVFTVSLRRPGRGSCGFSPSATGRGVLSMAALSHGVVRVDSEDSLTSLTLQDCGQVMPAAQMVVVRSEGPPVLCKTDQVGEICVTSGSTSASYFGLDGMTNSTFKVQPLLEELEQPKDGNGTVNIISKPIGEDFYVRSGLLGFLGPGGLVFVCGSRDGLMTVTGRKHNADDIIATVLAVEPMRFIYRGRIAVFSIKVLRDERVCVIAEQRPDCSEEESFQWMSRVLQAVDSIHQVGIYCLALVPPNHLPKTPLGGIHLCEARRRFLEGSLHPANVLMCPHTCVTNLPKPRELHQGVQTAAKLSSSSGCGITDTGVGPASVMVGNLVQGNRLAEAHGRDVGLAEDCERKPQLITGVLRWRANTSPDHIIFTLLNSKGAIAKTLTCSELHKRAEKIAALLQERGRIEPGDHVALIFPPGLDLLCAFYGCLYLGAIPITIRPPHPQNLNTTLPTVRMIVDVSKSGIVLSIQPIIKLLKSREAATSIDPKTWPPILDIDDNPKRKYAGIATVSFDSSAYLDFSVSTCGRLSGVNITHRSLSSLCASLKLACELYPSRHVALCLDPYCGLGFVMWTLIGVYSGHHSILIAPYEVEANPSLWLSTLSQHRVRDTFCSYGVIELCTKALSNSIPSLKQRNIDLRCVRTCVVVAEERPRVQLTQQFCKLFQALGLNTRCVSTSFGCRVNPAICVQGASSAESAQVYVDMRALRNNRVALVERGAPNSLCVIESGKLLPGVKVIIANPETKGHCGDSHLGEIWVQAPHNANGYFTIYGDETDYNDHFNAKLVTGATSELYARTGYLGFLRRTECSQSASLLDETTPSVASRDSDTESLNSISQLQLNFSNVSLGGNSEHSLVGGASNANDQELHDAVYVVGAVDEVISLRGMNYHPIDIENSVMRCHKKIAECAVFTWTNLLVVVVELDGNESEALDLVPLVTNTVLEDHQLIVGVVVVVDPGVVPINSRGEKQRMHLRDGFLADQLDPIYVAYNM</sequence>
<name>DIP2_DROME</name>
<accession>Q9W0S9</accession>
<accession>Q9NGP2</accession>
<protein>
    <recommendedName>
        <fullName evidence="9">Disco-interacting protein 2</fullName>
    </recommendedName>
</protein>
<organism evidence="10">
    <name type="scientific">Drosophila melanogaster</name>
    <name type="common">Fruit fly</name>
    <dbReference type="NCBI Taxonomy" id="7227"/>
    <lineage>
        <taxon>Eukaryota</taxon>
        <taxon>Metazoa</taxon>
        <taxon>Ecdysozoa</taxon>
        <taxon>Arthropoda</taxon>
        <taxon>Hexapoda</taxon>
        <taxon>Insecta</taxon>
        <taxon>Pterygota</taxon>
        <taxon>Neoptera</taxon>
        <taxon>Endopterygota</taxon>
        <taxon>Diptera</taxon>
        <taxon>Brachycera</taxon>
        <taxon>Muscomorpha</taxon>
        <taxon>Ephydroidea</taxon>
        <taxon>Drosophilidae</taxon>
        <taxon>Drosophila</taxon>
        <taxon>Sophophora</taxon>
    </lineage>
</organism>
<comment type="function">
    <text evidence="5 6 7">Required for precise axonal bifurcation in mushroom body neurons by suppressing ectopic bifurcation and regulating the guidance of sister axons (PubMed:27908785, PubMed:28396149). May function by regulating expression of tdp1 (PubMed:28465232). Acts downstream of the serine/threonine-protein kinase Bsk to modulate the direction of axon projection (PubMed:28396149). May play a role in fatty acid metabolism (PubMed:27908785).</text>
</comment>
<comment type="subunit">
    <text evidence="3">Interacts with Disco.</text>
</comment>
<comment type="subcellular location">
    <subcellularLocation>
        <location evidence="5 6">Cell membrane</location>
        <topology evidence="8">Peripheral membrane protein</topology>
    </subcellularLocation>
</comment>
<comment type="tissue specificity">
    <text evidence="3 5">Expressed in the developing nervous system (PubMed:12137943). Ubiquitously expressed in the developing brain (PubMed:27908785). Within the mushroom body, a higher level is detected in the core of lobes and peduncle in the late third instar larva (PubMed:12137943). Detected in whole mushroom body neuron structures at 48 hours after puparium formation and during later stages (PubMed:27908785).</text>
</comment>
<comment type="developmental stage">
    <text>Highly expressed in the central nervous system (CNS) in both the brain lobes and the ventral cord throughout embryogenesis, from early stages of neurogenesis. Expressed in both neuroblasts and neurons. Expressed at lower level in the visceral mesoderm during stage 12. Expression of DIP2 overlaps with that of Disco in the visceral mesoderm and CNS.</text>
</comment>
<comment type="disruption phenotype">
    <text evidence="5 6 7">Mushroom body lobe defects including ectopic axon bifurcations and/or axon guidance defects (PubMed:27908785). RNAi-mediated knockdown results in an increase in the number of mushroom body lobes as well as ectopic lobes and guidance defects (PubMed:27908785, PubMed:28396149).</text>
</comment>
<comment type="similarity">
    <text evidence="8">Belongs to the DIP2 family.</text>
</comment>
<comment type="sequence caution" evidence="8">
    <conflict type="frameshift">
        <sequence resource="EMBL-CDS" id="AAF64300"/>
    </conflict>
</comment>
<dbReference type="EMBL" id="AF246991">
    <property type="protein sequence ID" value="AAF64300.1"/>
    <property type="status" value="ALT_FRAME"/>
    <property type="molecule type" value="mRNA"/>
</dbReference>
<dbReference type="EMBL" id="AE014296">
    <property type="protein sequence ID" value="AAF47364.2"/>
    <property type="molecule type" value="Genomic_DNA"/>
</dbReference>
<dbReference type="RefSeq" id="NP_612019.2">
    <property type="nucleotide sequence ID" value="NM_138175.4"/>
</dbReference>
<dbReference type="SMR" id="Q9W0S9"/>
<dbReference type="BioGRID" id="76010">
    <property type="interactions" value="1"/>
</dbReference>
<dbReference type="FunCoup" id="Q9W0S9">
    <property type="interactions" value="726"/>
</dbReference>
<dbReference type="IntAct" id="Q9W0S9">
    <property type="interactions" value="3"/>
</dbReference>
<dbReference type="STRING" id="7227.FBpp0072420"/>
<dbReference type="iPTMnet" id="Q9W0S9"/>
<dbReference type="PaxDb" id="7227-FBpp0072420"/>
<dbReference type="EnsemblMetazoa" id="FBtr0072520">
    <property type="protein sequence ID" value="FBpp0072420"/>
    <property type="gene ID" value="FBgn0024806"/>
</dbReference>
<dbReference type="GeneID" id="252479"/>
<dbReference type="KEGG" id="dme:Dmel_CG7020"/>
<dbReference type="AGR" id="FB:FBgn0024806"/>
<dbReference type="CTD" id="252479"/>
<dbReference type="FlyBase" id="FBgn0024806">
    <property type="gene designation" value="DIP2"/>
</dbReference>
<dbReference type="VEuPathDB" id="VectorBase:FBgn0024806"/>
<dbReference type="eggNOG" id="KOG3628">
    <property type="taxonomic scope" value="Eukaryota"/>
</dbReference>
<dbReference type="GeneTree" id="ENSGT00950000182997"/>
<dbReference type="InParanoid" id="Q9W0S9"/>
<dbReference type="OMA" id="CERPQVA"/>
<dbReference type="OrthoDB" id="69964at2759"/>
<dbReference type="PhylomeDB" id="Q9W0S9"/>
<dbReference type="SignaLink" id="Q9W0S9"/>
<dbReference type="BioGRID-ORCS" id="252479">
    <property type="hits" value="1 hit in 3 CRISPR screens"/>
</dbReference>
<dbReference type="ChiTaRS" id="norpA">
    <property type="organism name" value="fly"/>
</dbReference>
<dbReference type="GenomeRNAi" id="252479"/>
<dbReference type="PRO" id="PR:Q9W0S9"/>
<dbReference type="Proteomes" id="UP000000803">
    <property type="component" value="Chromosome 3L"/>
</dbReference>
<dbReference type="Bgee" id="FBgn0024806">
    <property type="expression patterns" value="Expressed in eye photoreceptor cell (Drosophila) in open tracheal system trachea and 242 other cell types or tissues"/>
</dbReference>
<dbReference type="ExpressionAtlas" id="Q9W0S9">
    <property type="expression patterns" value="baseline and differential"/>
</dbReference>
<dbReference type="GO" id="GO:0005886">
    <property type="term" value="C:plasma membrane"/>
    <property type="evidence" value="ECO:0000314"/>
    <property type="project" value="UniProtKB"/>
</dbReference>
<dbReference type="GO" id="GO:0003987">
    <property type="term" value="F:acetate-CoA ligase activity"/>
    <property type="evidence" value="ECO:0000250"/>
    <property type="project" value="FlyBase"/>
</dbReference>
<dbReference type="GO" id="GO:0006085">
    <property type="term" value="P:acetyl-CoA biosynthetic process"/>
    <property type="evidence" value="ECO:0000250"/>
    <property type="project" value="FlyBase"/>
</dbReference>
<dbReference type="GO" id="GO:0007411">
    <property type="term" value="P:axon guidance"/>
    <property type="evidence" value="ECO:0000315"/>
    <property type="project" value="UniProtKB"/>
</dbReference>
<dbReference type="CDD" id="cd05905">
    <property type="entry name" value="Dip2"/>
    <property type="match status" value="2"/>
</dbReference>
<dbReference type="FunFam" id="3.30.300.30:FF:000001">
    <property type="entry name" value="DIP2 disco-interacting protein 2 homolog C"/>
    <property type="match status" value="1"/>
</dbReference>
<dbReference type="Gene3D" id="3.30.300.30">
    <property type="match status" value="2"/>
</dbReference>
<dbReference type="Gene3D" id="3.40.50.12780">
    <property type="entry name" value="N-terminal domain of ligase-like"/>
    <property type="match status" value="2"/>
</dbReference>
<dbReference type="InterPro" id="IPR025110">
    <property type="entry name" value="AMP-bd_C"/>
</dbReference>
<dbReference type="InterPro" id="IPR045851">
    <property type="entry name" value="AMP-bd_C_sf"/>
</dbReference>
<dbReference type="InterPro" id="IPR000873">
    <property type="entry name" value="AMP-dep_synth/lig_dom"/>
</dbReference>
<dbReference type="InterPro" id="IPR042099">
    <property type="entry name" value="ANL_N_sf"/>
</dbReference>
<dbReference type="InterPro" id="IPR037337">
    <property type="entry name" value="Dip2-like_dom"/>
</dbReference>
<dbReference type="InterPro" id="IPR010506">
    <property type="entry name" value="DMAP1-bd"/>
</dbReference>
<dbReference type="PANTHER" id="PTHR22754:SF32">
    <property type="entry name" value="DISCO-INTERACTING PROTEIN 2"/>
    <property type="match status" value="1"/>
</dbReference>
<dbReference type="PANTHER" id="PTHR22754">
    <property type="entry name" value="DISCO-INTERACTING PROTEIN 2 DIP2 -RELATED"/>
    <property type="match status" value="1"/>
</dbReference>
<dbReference type="Pfam" id="PF00501">
    <property type="entry name" value="AMP-binding"/>
    <property type="match status" value="2"/>
</dbReference>
<dbReference type="Pfam" id="PF23024">
    <property type="entry name" value="AMP-dom_DIP2-like"/>
    <property type="match status" value="1"/>
</dbReference>
<dbReference type="Pfam" id="PF06464">
    <property type="entry name" value="DMAP_binding"/>
    <property type="match status" value="1"/>
</dbReference>
<dbReference type="SMART" id="SM01137">
    <property type="entry name" value="DMAP_binding"/>
    <property type="match status" value="1"/>
</dbReference>
<dbReference type="SUPFAM" id="SSF56801">
    <property type="entry name" value="Acetyl-CoA synthetase-like"/>
    <property type="match status" value="2"/>
</dbReference>
<dbReference type="PROSITE" id="PS51912">
    <property type="entry name" value="DMAP1_BIND"/>
    <property type="match status" value="1"/>
</dbReference>
<feature type="chain" id="PRO_0000079905" description="Disco-interacting protein 2">
    <location>
        <begin position="1"/>
        <end position="1773"/>
    </location>
</feature>
<feature type="domain" description="DMAP1-binding" evidence="1">
    <location>
        <begin position="3"/>
        <end position="110"/>
    </location>
</feature>
<feature type="region of interest" description="Disordered" evidence="2">
    <location>
        <begin position="112"/>
        <end position="185"/>
    </location>
</feature>
<feature type="region of interest" description="Disordered" evidence="2">
    <location>
        <begin position="198"/>
        <end position="319"/>
    </location>
</feature>
<feature type="compositionally biased region" description="Polar residues" evidence="2">
    <location>
        <begin position="113"/>
        <end position="125"/>
    </location>
</feature>
<feature type="compositionally biased region" description="Polar residues" evidence="2">
    <location>
        <begin position="146"/>
        <end position="165"/>
    </location>
</feature>
<feature type="compositionally biased region" description="Basic residues" evidence="2">
    <location>
        <begin position="166"/>
        <end position="175"/>
    </location>
</feature>
<feature type="compositionally biased region" description="Basic and acidic residues" evidence="2">
    <location>
        <begin position="176"/>
        <end position="185"/>
    </location>
</feature>
<feature type="compositionally biased region" description="Acidic residues" evidence="2">
    <location>
        <begin position="224"/>
        <end position="236"/>
    </location>
</feature>
<feature type="compositionally biased region" description="Basic and acidic residues" evidence="2">
    <location>
        <begin position="241"/>
        <end position="253"/>
    </location>
</feature>
<feature type="compositionally biased region" description="Polar residues" evidence="2">
    <location>
        <begin position="272"/>
        <end position="297"/>
    </location>
</feature>
<feature type="modified residue" description="Phosphotyrosine" evidence="4">
    <location>
        <position position="60"/>
    </location>
</feature>
<feature type="modified residue" description="Phosphotyrosine" evidence="4">
    <location>
        <position position="61"/>
    </location>
</feature>
<feature type="sequence conflict" description="In Ref. 1; AAF64300." evidence="8" ref="1">
    <original>PLGGIHLCEAR</original>
    <variation>LLGAYIYAKHG</variation>
    <location>
        <begin position="1038"/>
        <end position="1048"/>
    </location>
</feature>